<sequence>MPKQKTHRASAKRFKRTGSGGLKRFRAFTSHRFHGKTKKQRRHLRKAGLVSSGDFKRIKAMVTGL</sequence>
<organism>
    <name type="scientific">Streptococcus pyogenes serotype M5 (strain Manfredo)</name>
    <dbReference type="NCBI Taxonomy" id="160491"/>
    <lineage>
        <taxon>Bacteria</taxon>
        <taxon>Bacillati</taxon>
        <taxon>Bacillota</taxon>
        <taxon>Bacilli</taxon>
        <taxon>Lactobacillales</taxon>
        <taxon>Streptococcaceae</taxon>
        <taxon>Streptococcus</taxon>
    </lineage>
</organism>
<gene>
    <name evidence="1" type="primary">rpmI</name>
    <name type="ordered locus">SpyM51187</name>
</gene>
<keyword id="KW-0687">Ribonucleoprotein</keyword>
<keyword id="KW-0689">Ribosomal protein</keyword>
<accession>A2RF83</accession>
<dbReference type="EMBL" id="AM295007">
    <property type="protein sequence ID" value="CAM30512.1"/>
    <property type="molecule type" value="Genomic_DNA"/>
</dbReference>
<dbReference type="RefSeq" id="WP_002985151.1">
    <property type="nucleotide sequence ID" value="NC_009332.1"/>
</dbReference>
<dbReference type="SMR" id="A2RF83"/>
<dbReference type="GeneID" id="83690415"/>
<dbReference type="KEGG" id="spf:SpyM51187"/>
<dbReference type="HOGENOM" id="CLU_169643_3_1_9"/>
<dbReference type="GO" id="GO:0022625">
    <property type="term" value="C:cytosolic large ribosomal subunit"/>
    <property type="evidence" value="ECO:0007669"/>
    <property type="project" value="TreeGrafter"/>
</dbReference>
<dbReference type="GO" id="GO:0003735">
    <property type="term" value="F:structural constituent of ribosome"/>
    <property type="evidence" value="ECO:0007669"/>
    <property type="project" value="InterPro"/>
</dbReference>
<dbReference type="GO" id="GO:0006412">
    <property type="term" value="P:translation"/>
    <property type="evidence" value="ECO:0007669"/>
    <property type="project" value="UniProtKB-UniRule"/>
</dbReference>
<dbReference type="FunFam" id="4.10.410.60:FF:000001">
    <property type="entry name" value="50S ribosomal protein L35"/>
    <property type="match status" value="1"/>
</dbReference>
<dbReference type="Gene3D" id="4.10.410.60">
    <property type="match status" value="1"/>
</dbReference>
<dbReference type="HAMAP" id="MF_00514">
    <property type="entry name" value="Ribosomal_bL35"/>
    <property type="match status" value="1"/>
</dbReference>
<dbReference type="InterPro" id="IPR001706">
    <property type="entry name" value="Ribosomal_bL35"/>
</dbReference>
<dbReference type="InterPro" id="IPR021137">
    <property type="entry name" value="Ribosomal_bL35-like"/>
</dbReference>
<dbReference type="InterPro" id="IPR018265">
    <property type="entry name" value="Ribosomal_bL35_CS"/>
</dbReference>
<dbReference type="InterPro" id="IPR037229">
    <property type="entry name" value="Ribosomal_bL35_sf"/>
</dbReference>
<dbReference type="NCBIfam" id="TIGR00001">
    <property type="entry name" value="rpmI_bact"/>
    <property type="match status" value="1"/>
</dbReference>
<dbReference type="PANTHER" id="PTHR33343">
    <property type="entry name" value="54S RIBOSOMAL PROTEIN BL35M"/>
    <property type="match status" value="1"/>
</dbReference>
<dbReference type="PANTHER" id="PTHR33343:SF1">
    <property type="entry name" value="LARGE RIBOSOMAL SUBUNIT PROTEIN BL35M"/>
    <property type="match status" value="1"/>
</dbReference>
<dbReference type="Pfam" id="PF01632">
    <property type="entry name" value="Ribosomal_L35p"/>
    <property type="match status" value="1"/>
</dbReference>
<dbReference type="PRINTS" id="PR00064">
    <property type="entry name" value="RIBOSOMALL35"/>
</dbReference>
<dbReference type="SUPFAM" id="SSF143034">
    <property type="entry name" value="L35p-like"/>
    <property type="match status" value="1"/>
</dbReference>
<dbReference type="PROSITE" id="PS00936">
    <property type="entry name" value="RIBOSOMAL_L35"/>
    <property type="match status" value="1"/>
</dbReference>
<proteinExistence type="inferred from homology"/>
<evidence type="ECO:0000255" key="1">
    <source>
        <dbReference type="HAMAP-Rule" id="MF_00514"/>
    </source>
</evidence>
<evidence type="ECO:0000256" key="2">
    <source>
        <dbReference type="SAM" id="MobiDB-lite"/>
    </source>
</evidence>
<evidence type="ECO:0000305" key="3"/>
<feature type="chain" id="PRO_1000050774" description="Large ribosomal subunit protein bL35">
    <location>
        <begin position="1"/>
        <end position="65"/>
    </location>
</feature>
<feature type="region of interest" description="Disordered" evidence="2">
    <location>
        <begin position="1"/>
        <end position="20"/>
    </location>
</feature>
<feature type="compositionally biased region" description="Basic residues" evidence="2">
    <location>
        <begin position="1"/>
        <end position="16"/>
    </location>
</feature>
<protein>
    <recommendedName>
        <fullName evidence="1">Large ribosomal subunit protein bL35</fullName>
    </recommendedName>
    <alternativeName>
        <fullName evidence="3">50S ribosomal protein L35</fullName>
    </alternativeName>
</protein>
<reference key="1">
    <citation type="journal article" date="2007" name="J. Bacteriol.">
        <title>Complete genome of acute rheumatic fever-associated serotype M5 Streptococcus pyogenes strain Manfredo.</title>
        <authorList>
            <person name="Holden M.T.G."/>
            <person name="Scott A."/>
            <person name="Cherevach I."/>
            <person name="Chillingworth T."/>
            <person name="Churcher C."/>
            <person name="Cronin A."/>
            <person name="Dowd L."/>
            <person name="Feltwell T."/>
            <person name="Hamlin N."/>
            <person name="Holroyd S."/>
            <person name="Jagels K."/>
            <person name="Moule S."/>
            <person name="Mungall K."/>
            <person name="Quail M.A."/>
            <person name="Price C."/>
            <person name="Rabbinowitsch E."/>
            <person name="Sharp S."/>
            <person name="Skelton J."/>
            <person name="Whitehead S."/>
            <person name="Barrell B.G."/>
            <person name="Kehoe M."/>
            <person name="Parkhill J."/>
        </authorList>
    </citation>
    <scope>NUCLEOTIDE SEQUENCE [LARGE SCALE GENOMIC DNA]</scope>
    <source>
        <strain>Manfredo</strain>
    </source>
</reference>
<comment type="similarity">
    <text evidence="1">Belongs to the bacterial ribosomal protein bL35 family.</text>
</comment>
<name>RL35_STRPG</name>